<protein>
    <recommendedName>
        <fullName evidence="1">Heat-inducible transcription repressor HrcA</fullName>
    </recommendedName>
</protein>
<gene>
    <name evidence="1" type="primary">hrcA</name>
    <name type="ordered locus">BQ2027_MB2395C</name>
</gene>
<accession>P64399</accession>
<accession>A0A1R3Y1E7</accession>
<accession>O05824</accession>
<accession>X2BKW5</accession>
<keyword id="KW-1185">Reference proteome</keyword>
<keyword id="KW-0678">Repressor</keyword>
<keyword id="KW-0346">Stress response</keyword>
<keyword id="KW-0804">Transcription</keyword>
<keyword id="KW-0805">Transcription regulation</keyword>
<feature type="chain" id="PRO_0000182500" description="Heat-inducible transcription repressor HrcA">
    <location>
        <begin position="1"/>
        <end position="343"/>
    </location>
</feature>
<sequence length="343" mass="36475">MGSADERRFEVLRAIVADFVATQEPIGSKSLVERHNLGVSSATVRNDMAVLEAEGYITQPHTSSGRVPTEKGYREFVDRLEDVKPLSSAERRAIQSFLESGVDLDDVLRRAVRLLAQLTRQVAVVQYPTLSTSTVRHLEVIALTPARLLMVVITDSGRVDQRIVELGDVIDDHQLAQLREILGQALEGKKLSAASVAVADLASQLGGAGGLGDAVGRAATVLLESLVEHTEERLLLGGTANLTRNAADFGGSLRSILEALEEQVVVLRLLAAQQEAGKVTVRIGHETASEQMVGTSMVSTAYGTAHTVYGGMGVVGPTRMDYPGTIASVAAVALYIGDVLGAR</sequence>
<comment type="function">
    <text evidence="1">Negative regulator of class I heat shock genes (grpE-dnaK-dnaJ and groELS operons). Prevents heat-shock induction of these operons.</text>
</comment>
<comment type="similarity">
    <text evidence="1">Belongs to the HrcA family.</text>
</comment>
<reference key="1">
    <citation type="journal article" date="2003" name="Proc. Natl. Acad. Sci. U.S.A.">
        <title>The complete genome sequence of Mycobacterium bovis.</title>
        <authorList>
            <person name="Garnier T."/>
            <person name="Eiglmeier K."/>
            <person name="Camus J.-C."/>
            <person name="Medina N."/>
            <person name="Mansoor H."/>
            <person name="Pryor M."/>
            <person name="Duthoy S."/>
            <person name="Grondin S."/>
            <person name="Lacroix C."/>
            <person name="Monsempe C."/>
            <person name="Simon S."/>
            <person name="Harris B."/>
            <person name="Atkin R."/>
            <person name="Doggett J."/>
            <person name="Mayes R."/>
            <person name="Keating L."/>
            <person name="Wheeler P.R."/>
            <person name="Parkhill J."/>
            <person name="Barrell B.G."/>
            <person name="Cole S.T."/>
            <person name="Gordon S.V."/>
            <person name="Hewinson R.G."/>
        </authorList>
    </citation>
    <scope>NUCLEOTIDE SEQUENCE [LARGE SCALE GENOMIC DNA]</scope>
    <source>
        <strain>ATCC BAA-935 / AF2122/97</strain>
    </source>
</reference>
<reference key="2">
    <citation type="journal article" date="2017" name="Genome Announc.">
        <title>Updated reference genome sequence and annotation of Mycobacterium bovis AF2122/97.</title>
        <authorList>
            <person name="Malone K.M."/>
            <person name="Farrell D."/>
            <person name="Stuber T.P."/>
            <person name="Schubert O.T."/>
            <person name="Aebersold R."/>
            <person name="Robbe-Austerman S."/>
            <person name="Gordon S.V."/>
        </authorList>
    </citation>
    <scope>NUCLEOTIDE SEQUENCE [LARGE SCALE GENOMIC DNA]</scope>
    <scope>GENOME REANNOTATION</scope>
    <source>
        <strain>ATCC BAA-935 / AF2122/97</strain>
    </source>
</reference>
<organism>
    <name type="scientific">Mycobacterium bovis (strain ATCC BAA-935 / AF2122/97)</name>
    <dbReference type="NCBI Taxonomy" id="233413"/>
    <lineage>
        <taxon>Bacteria</taxon>
        <taxon>Bacillati</taxon>
        <taxon>Actinomycetota</taxon>
        <taxon>Actinomycetes</taxon>
        <taxon>Mycobacteriales</taxon>
        <taxon>Mycobacteriaceae</taxon>
        <taxon>Mycobacterium</taxon>
        <taxon>Mycobacterium tuberculosis complex</taxon>
    </lineage>
</organism>
<proteinExistence type="inferred from homology"/>
<evidence type="ECO:0000255" key="1">
    <source>
        <dbReference type="HAMAP-Rule" id="MF_00081"/>
    </source>
</evidence>
<name>HRCA_MYCBO</name>
<dbReference type="EMBL" id="LT708304">
    <property type="protein sequence ID" value="SIU01007.1"/>
    <property type="molecule type" value="Genomic_DNA"/>
</dbReference>
<dbReference type="RefSeq" id="NP_856044.1">
    <property type="nucleotide sequence ID" value="NC_002945.3"/>
</dbReference>
<dbReference type="RefSeq" id="WP_003412252.1">
    <property type="nucleotide sequence ID" value="NC_002945.4"/>
</dbReference>
<dbReference type="SMR" id="P64399"/>
<dbReference type="GeneID" id="45426359"/>
<dbReference type="KEGG" id="mbo:BQ2027_MB2395C"/>
<dbReference type="PATRIC" id="fig|233413.5.peg.2632"/>
<dbReference type="Proteomes" id="UP000001419">
    <property type="component" value="Chromosome"/>
</dbReference>
<dbReference type="GO" id="GO:0003677">
    <property type="term" value="F:DNA binding"/>
    <property type="evidence" value="ECO:0007669"/>
    <property type="project" value="InterPro"/>
</dbReference>
<dbReference type="GO" id="GO:0045892">
    <property type="term" value="P:negative regulation of DNA-templated transcription"/>
    <property type="evidence" value="ECO:0007669"/>
    <property type="project" value="UniProtKB-UniRule"/>
</dbReference>
<dbReference type="FunFam" id="1.10.10.10:FF:000049">
    <property type="entry name" value="Heat-inducible transcription repressor HrcA"/>
    <property type="match status" value="1"/>
</dbReference>
<dbReference type="FunFam" id="3.30.390.60:FF:000003">
    <property type="entry name" value="Heat-inducible transcription repressor HrcA"/>
    <property type="match status" value="1"/>
</dbReference>
<dbReference type="Gene3D" id="3.30.450.40">
    <property type="match status" value="1"/>
</dbReference>
<dbReference type="Gene3D" id="3.30.390.60">
    <property type="entry name" value="Heat-inducible transcription repressor hrca homolog, domain 3"/>
    <property type="match status" value="1"/>
</dbReference>
<dbReference type="Gene3D" id="1.10.10.10">
    <property type="entry name" value="Winged helix-like DNA-binding domain superfamily/Winged helix DNA-binding domain"/>
    <property type="match status" value="1"/>
</dbReference>
<dbReference type="HAMAP" id="MF_00081">
    <property type="entry name" value="HrcA"/>
    <property type="match status" value="1"/>
</dbReference>
<dbReference type="InterPro" id="IPR029016">
    <property type="entry name" value="GAF-like_dom_sf"/>
</dbReference>
<dbReference type="InterPro" id="IPR002571">
    <property type="entry name" value="HrcA"/>
</dbReference>
<dbReference type="InterPro" id="IPR021153">
    <property type="entry name" value="HrcA_C"/>
</dbReference>
<dbReference type="InterPro" id="IPR036388">
    <property type="entry name" value="WH-like_DNA-bd_sf"/>
</dbReference>
<dbReference type="InterPro" id="IPR036390">
    <property type="entry name" value="WH_DNA-bd_sf"/>
</dbReference>
<dbReference type="InterPro" id="IPR023120">
    <property type="entry name" value="WHTH_transcript_rep_HrcA_IDD"/>
</dbReference>
<dbReference type="NCBIfam" id="TIGR00331">
    <property type="entry name" value="hrcA"/>
    <property type="match status" value="1"/>
</dbReference>
<dbReference type="PANTHER" id="PTHR34824">
    <property type="entry name" value="HEAT-INDUCIBLE TRANSCRIPTION REPRESSOR HRCA"/>
    <property type="match status" value="1"/>
</dbReference>
<dbReference type="PANTHER" id="PTHR34824:SF1">
    <property type="entry name" value="HEAT-INDUCIBLE TRANSCRIPTION REPRESSOR HRCA"/>
    <property type="match status" value="1"/>
</dbReference>
<dbReference type="Pfam" id="PF01628">
    <property type="entry name" value="HrcA"/>
    <property type="match status" value="1"/>
</dbReference>
<dbReference type="PIRSF" id="PIRSF005485">
    <property type="entry name" value="HrcA"/>
    <property type="match status" value="1"/>
</dbReference>
<dbReference type="SUPFAM" id="SSF55781">
    <property type="entry name" value="GAF domain-like"/>
    <property type="match status" value="1"/>
</dbReference>
<dbReference type="SUPFAM" id="SSF46785">
    <property type="entry name" value="Winged helix' DNA-binding domain"/>
    <property type="match status" value="1"/>
</dbReference>